<reference key="1">
    <citation type="submission" date="2007-06" db="EMBL/GenBank/DDBJ databases">
        <title>Complete sequence of Methanococcus maripaludis C7.</title>
        <authorList>
            <consortium name="US DOE Joint Genome Institute"/>
            <person name="Copeland A."/>
            <person name="Lucas S."/>
            <person name="Lapidus A."/>
            <person name="Barry K."/>
            <person name="Glavina del Rio T."/>
            <person name="Dalin E."/>
            <person name="Tice H."/>
            <person name="Pitluck S."/>
            <person name="Clum A."/>
            <person name="Schmutz J."/>
            <person name="Larimer F."/>
            <person name="Land M."/>
            <person name="Hauser L."/>
            <person name="Kyrpides N."/>
            <person name="Anderson I."/>
            <person name="Sieprawska-Lupa M."/>
            <person name="Whitman W.B."/>
            <person name="Richardson P."/>
        </authorList>
    </citation>
    <scope>NUCLEOTIDE SEQUENCE [LARGE SCALE GENOMIC DNA]</scope>
    <source>
        <strain>C7 / ATCC BAA-1331</strain>
    </source>
</reference>
<proteinExistence type="inferred from homology"/>
<keyword id="KW-0963">Cytoplasm</keyword>
<keyword id="KW-0328">Glycosyltransferase</keyword>
<keyword id="KW-0660">Purine salvage</keyword>
<keyword id="KW-0808">Transferase</keyword>
<protein>
    <recommendedName>
        <fullName evidence="1">Adenine phosphoribosyltransferase</fullName>
        <shortName evidence="1">APRT</shortName>
        <ecNumber evidence="1">2.4.2.7</ecNumber>
    </recommendedName>
</protein>
<name>APT_METM7</name>
<accession>A6VJW6</accession>
<feature type="chain" id="PRO_0000329376" description="Adenine phosphoribosyltransferase">
    <location>
        <begin position="1"/>
        <end position="172"/>
    </location>
</feature>
<dbReference type="EC" id="2.4.2.7" evidence="1"/>
<dbReference type="EMBL" id="CP000745">
    <property type="protein sequence ID" value="ABR66742.1"/>
    <property type="molecule type" value="Genomic_DNA"/>
</dbReference>
<dbReference type="SMR" id="A6VJW6"/>
<dbReference type="STRING" id="426368.MmarC7_1686"/>
<dbReference type="KEGG" id="mmz:MmarC7_1686"/>
<dbReference type="eggNOG" id="arCOG00030">
    <property type="taxonomic scope" value="Archaea"/>
</dbReference>
<dbReference type="HOGENOM" id="CLU_063339_3_0_2"/>
<dbReference type="OrthoDB" id="8323at2157"/>
<dbReference type="UniPathway" id="UPA00588">
    <property type="reaction ID" value="UER00646"/>
</dbReference>
<dbReference type="GO" id="GO:0005737">
    <property type="term" value="C:cytoplasm"/>
    <property type="evidence" value="ECO:0007669"/>
    <property type="project" value="UniProtKB-SubCell"/>
</dbReference>
<dbReference type="GO" id="GO:0002055">
    <property type="term" value="F:adenine binding"/>
    <property type="evidence" value="ECO:0007669"/>
    <property type="project" value="TreeGrafter"/>
</dbReference>
<dbReference type="GO" id="GO:0003999">
    <property type="term" value="F:adenine phosphoribosyltransferase activity"/>
    <property type="evidence" value="ECO:0007669"/>
    <property type="project" value="UniProtKB-UniRule"/>
</dbReference>
<dbReference type="GO" id="GO:0016208">
    <property type="term" value="F:AMP binding"/>
    <property type="evidence" value="ECO:0007669"/>
    <property type="project" value="TreeGrafter"/>
</dbReference>
<dbReference type="GO" id="GO:0006168">
    <property type="term" value="P:adenine salvage"/>
    <property type="evidence" value="ECO:0007669"/>
    <property type="project" value="InterPro"/>
</dbReference>
<dbReference type="GO" id="GO:0044209">
    <property type="term" value="P:AMP salvage"/>
    <property type="evidence" value="ECO:0007669"/>
    <property type="project" value="UniProtKB-UniRule"/>
</dbReference>
<dbReference type="GO" id="GO:0006166">
    <property type="term" value="P:purine ribonucleoside salvage"/>
    <property type="evidence" value="ECO:0007669"/>
    <property type="project" value="UniProtKB-KW"/>
</dbReference>
<dbReference type="CDD" id="cd06223">
    <property type="entry name" value="PRTases_typeI"/>
    <property type="match status" value="1"/>
</dbReference>
<dbReference type="FunFam" id="3.40.50.2020:FF:000004">
    <property type="entry name" value="Adenine phosphoribosyltransferase"/>
    <property type="match status" value="1"/>
</dbReference>
<dbReference type="Gene3D" id="3.40.50.2020">
    <property type="match status" value="1"/>
</dbReference>
<dbReference type="HAMAP" id="MF_00004">
    <property type="entry name" value="Aden_phosphoribosyltr"/>
    <property type="match status" value="1"/>
</dbReference>
<dbReference type="InterPro" id="IPR005764">
    <property type="entry name" value="Ade_phspho_trans"/>
</dbReference>
<dbReference type="InterPro" id="IPR000836">
    <property type="entry name" value="PRibTrfase_dom"/>
</dbReference>
<dbReference type="InterPro" id="IPR029057">
    <property type="entry name" value="PRTase-like"/>
</dbReference>
<dbReference type="InterPro" id="IPR050054">
    <property type="entry name" value="UPRTase/APRTase"/>
</dbReference>
<dbReference type="NCBIfam" id="TIGR01090">
    <property type="entry name" value="apt"/>
    <property type="match status" value="1"/>
</dbReference>
<dbReference type="NCBIfam" id="NF002633">
    <property type="entry name" value="PRK02304.1-2"/>
    <property type="match status" value="1"/>
</dbReference>
<dbReference type="NCBIfam" id="NF002634">
    <property type="entry name" value="PRK02304.1-3"/>
    <property type="match status" value="1"/>
</dbReference>
<dbReference type="NCBIfam" id="NF002636">
    <property type="entry name" value="PRK02304.1-5"/>
    <property type="match status" value="1"/>
</dbReference>
<dbReference type="NCBIfam" id="NF009211">
    <property type="entry name" value="PRK12560.1"/>
    <property type="match status" value="1"/>
</dbReference>
<dbReference type="PANTHER" id="PTHR32315">
    <property type="entry name" value="ADENINE PHOSPHORIBOSYLTRANSFERASE"/>
    <property type="match status" value="1"/>
</dbReference>
<dbReference type="PANTHER" id="PTHR32315:SF3">
    <property type="entry name" value="ADENINE PHOSPHORIBOSYLTRANSFERASE"/>
    <property type="match status" value="1"/>
</dbReference>
<dbReference type="Pfam" id="PF00156">
    <property type="entry name" value="Pribosyltran"/>
    <property type="match status" value="1"/>
</dbReference>
<dbReference type="SUPFAM" id="SSF53271">
    <property type="entry name" value="PRTase-like"/>
    <property type="match status" value="1"/>
</dbReference>
<evidence type="ECO:0000255" key="1">
    <source>
        <dbReference type="HAMAP-Rule" id="MF_00004"/>
    </source>
</evidence>
<comment type="function">
    <text evidence="1">Catalyzes a salvage reaction resulting in the formation of AMP, that is energically less costly than de novo synthesis.</text>
</comment>
<comment type="catalytic activity">
    <reaction evidence="1">
        <text>AMP + diphosphate = 5-phospho-alpha-D-ribose 1-diphosphate + adenine</text>
        <dbReference type="Rhea" id="RHEA:16609"/>
        <dbReference type="ChEBI" id="CHEBI:16708"/>
        <dbReference type="ChEBI" id="CHEBI:33019"/>
        <dbReference type="ChEBI" id="CHEBI:58017"/>
        <dbReference type="ChEBI" id="CHEBI:456215"/>
        <dbReference type="EC" id="2.4.2.7"/>
    </reaction>
</comment>
<comment type="pathway">
    <text evidence="1">Purine metabolism; AMP biosynthesis via salvage pathway; AMP from adenine: step 1/1.</text>
</comment>
<comment type="subunit">
    <text evidence="1">Homodimer.</text>
</comment>
<comment type="subcellular location">
    <subcellularLocation>
        <location evidence="1">Cytoplasm</location>
    </subcellularLocation>
</comment>
<comment type="similarity">
    <text evidence="1">Belongs to the purine/pyrimidine phosphoribosyltransferase family.</text>
</comment>
<organism>
    <name type="scientific">Methanococcus maripaludis (strain C7 / ATCC BAA-1331)</name>
    <dbReference type="NCBI Taxonomy" id="426368"/>
    <lineage>
        <taxon>Archaea</taxon>
        <taxon>Methanobacteriati</taxon>
        <taxon>Methanobacteriota</taxon>
        <taxon>Methanomada group</taxon>
        <taxon>Methanococci</taxon>
        <taxon>Methanococcales</taxon>
        <taxon>Methanococcaceae</taxon>
        <taxon>Methanococcus</taxon>
    </lineage>
</organism>
<gene>
    <name evidence="1" type="primary">apt2</name>
    <name type="ordered locus">MmarC7_1686</name>
</gene>
<sequence>MDLRKKIRIVEDFPIKGISFKDVTPILKDPKAMKHTTKEITKYLEDKNIDIIVGPEARGFLFGVPVAHELDIGFVPVRKPGKLPFKTFSVDYALEYGTDKLEIHSDGIEKGQNVAIVDDLLATGGTVSGVSKLVEKIGGHVSALNFVIELTELKGRDKLKGYDIQSLVKYDL</sequence>